<sequence>MANDYLFTSESVSEGHPDKVADQISDAILDAILAQDKYSRVAAETLCNTGLVVLAGEITTTANIDYIQIARDTIKRIGYDNTDYGIDYRGCAVLVAYDKQSPDIAQGVDRAHDNNLDQGAGDQGLMFGYACDETPELMPLPIHLSHRLVERQANLRRDGRLPWLRPDAKSQVTVRYVDGKPHSIDTVVLSTQHAPDIDLPALREAVIEEIIKPTLPADLIKGDIKFLVNPTGRFVIGGPQGDCGLTGRKIIVDTYGGAAPHGGGAFSGKDPSKVDRSAAYAGRYVAKNIVAAGLASRALIQVSYAIGVAEPTSVMVNTFGTGRVSDETITKLVREHFDLRPKGIIQMLDLLRPIYEKTAAYGHFGREEPEFSWEAADKALALAEAAGVEPAVQVA</sequence>
<comment type="function">
    <text evidence="1">Catalyzes the formation of S-adenosylmethionine (AdoMet) from methionine and ATP. The overall synthetic reaction is composed of two sequential steps, AdoMet formation and the subsequent tripolyphosphate hydrolysis which occurs prior to release of AdoMet from the enzyme.</text>
</comment>
<comment type="catalytic activity">
    <reaction evidence="1">
        <text>L-methionine + ATP + H2O = S-adenosyl-L-methionine + phosphate + diphosphate</text>
        <dbReference type="Rhea" id="RHEA:21080"/>
        <dbReference type="ChEBI" id="CHEBI:15377"/>
        <dbReference type="ChEBI" id="CHEBI:30616"/>
        <dbReference type="ChEBI" id="CHEBI:33019"/>
        <dbReference type="ChEBI" id="CHEBI:43474"/>
        <dbReference type="ChEBI" id="CHEBI:57844"/>
        <dbReference type="ChEBI" id="CHEBI:59789"/>
        <dbReference type="EC" id="2.5.1.6"/>
    </reaction>
</comment>
<comment type="cofactor">
    <cofactor evidence="1">
        <name>Mg(2+)</name>
        <dbReference type="ChEBI" id="CHEBI:18420"/>
    </cofactor>
    <text evidence="1">Binds 2 divalent ions per subunit.</text>
</comment>
<comment type="cofactor">
    <cofactor evidence="1">
        <name>K(+)</name>
        <dbReference type="ChEBI" id="CHEBI:29103"/>
    </cofactor>
    <text evidence="1">Binds 1 potassium ion per subunit.</text>
</comment>
<comment type="pathway">
    <text evidence="1">Amino-acid biosynthesis; S-adenosyl-L-methionine biosynthesis; S-adenosyl-L-methionine from L-methionine: step 1/1.</text>
</comment>
<comment type="subunit">
    <text evidence="1">Homotetramer; dimer of dimers.</text>
</comment>
<comment type="subcellular location">
    <subcellularLocation>
        <location evidence="1">Cytoplasm</location>
    </subcellularLocation>
</comment>
<comment type="similarity">
    <text evidence="1">Belongs to the AdoMet synthase family.</text>
</comment>
<name>METK_BURTA</name>
<proteinExistence type="inferred from homology"/>
<gene>
    <name evidence="1" type="primary">metK</name>
    <name type="ordered locus">BTH_I0174</name>
</gene>
<feature type="chain" id="PRO_0000240985" description="S-adenosylmethionine synthase">
    <location>
        <begin position="1"/>
        <end position="395"/>
    </location>
</feature>
<feature type="region of interest" description="Flexible loop" evidence="1">
    <location>
        <begin position="100"/>
        <end position="110"/>
    </location>
</feature>
<feature type="binding site" description="in other chain" evidence="1">
    <location>
        <position position="16"/>
    </location>
    <ligand>
        <name>ATP</name>
        <dbReference type="ChEBI" id="CHEBI:30616"/>
        <note>ligand shared between two neighboring subunits</note>
    </ligand>
</feature>
<feature type="binding site" evidence="1">
    <location>
        <position position="18"/>
    </location>
    <ligand>
        <name>Mg(2+)</name>
        <dbReference type="ChEBI" id="CHEBI:18420"/>
    </ligand>
</feature>
<feature type="binding site" evidence="1">
    <location>
        <position position="44"/>
    </location>
    <ligand>
        <name>K(+)</name>
        <dbReference type="ChEBI" id="CHEBI:29103"/>
    </ligand>
</feature>
<feature type="binding site" description="in other chain" evidence="1">
    <location>
        <position position="57"/>
    </location>
    <ligand>
        <name>L-methionine</name>
        <dbReference type="ChEBI" id="CHEBI:57844"/>
        <note>ligand shared between two neighboring subunits</note>
    </ligand>
</feature>
<feature type="binding site" description="in other chain" evidence="1">
    <location>
        <position position="100"/>
    </location>
    <ligand>
        <name>L-methionine</name>
        <dbReference type="ChEBI" id="CHEBI:57844"/>
        <note>ligand shared between two neighboring subunits</note>
    </ligand>
</feature>
<feature type="binding site" description="in other chain" evidence="1">
    <location>
        <begin position="167"/>
        <end position="169"/>
    </location>
    <ligand>
        <name>ATP</name>
        <dbReference type="ChEBI" id="CHEBI:30616"/>
        <note>ligand shared between two neighboring subunits</note>
    </ligand>
</feature>
<feature type="binding site" description="in other chain" evidence="1">
    <location>
        <begin position="233"/>
        <end position="234"/>
    </location>
    <ligand>
        <name>ATP</name>
        <dbReference type="ChEBI" id="CHEBI:30616"/>
        <note>ligand shared between two neighboring subunits</note>
    </ligand>
</feature>
<feature type="binding site" evidence="1">
    <location>
        <position position="242"/>
    </location>
    <ligand>
        <name>ATP</name>
        <dbReference type="ChEBI" id="CHEBI:30616"/>
        <note>ligand shared between two neighboring subunits</note>
    </ligand>
</feature>
<feature type="binding site" evidence="1">
    <location>
        <position position="242"/>
    </location>
    <ligand>
        <name>L-methionine</name>
        <dbReference type="ChEBI" id="CHEBI:57844"/>
        <note>ligand shared between two neighboring subunits</note>
    </ligand>
</feature>
<feature type="binding site" description="in other chain" evidence="1">
    <location>
        <begin position="248"/>
        <end position="249"/>
    </location>
    <ligand>
        <name>ATP</name>
        <dbReference type="ChEBI" id="CHEBI:30616"/>
        <note>ligand shared between two neighboring subunits</note>
    </ligand>
</feature>
<feature type="binding site" evidence="1">
    <location>
        <position position="265"/>
    </location>
    <ligand>
        <name>ATP</name>
        <dbReference type="ChEBI" id="CHEBI:30616"/>
        <note>ligand shared between two neighboring subunits</note>
    </ligand>
</feature>
<feature type="binding site" evidence="1">
    <location>
        <position position="269"/>
    </location>
    <ligand>
        <name>ATP</name>
        <dbReference type="ChEBI" id="CHEBI:30616"/>
        <note>ligand shared between two neighboring subunits</note>
    </ligand>
</feature>
<feature type="binding site" description="in other chain" evidence="1">
    <location>
        <position position="273"/>
    </location>
    <ligand>
        <name>L-methionine</name>
        <dbReference type="ChEBI" id="CHEBI:57844"/>
        <note>ligand shared between two neighboring subunits</note>
    </ligand>
</feature>
<evidence type="ECO:0000255" key="1">
    <source>
        <dbReference type="HAMAP-Rule" id="MF_00086"/>
    </source>
</evidence>
<protein>
    <recommendedName>
        <fullName evidence="1">S-adenosylmethionine synthase</fullName>
        <shortName evidence="1">AdoMet synthase</shortName>
        <ecNumber evidence="1">2.5.1.6</ecNumber>
    </recommendedName>
    <alternativeName>
        <fullName evidence="1">MAT</fullName>
    </alternativeName>
    <alternativeName>
        <fullName evidence="1">Methionine adenosyltransferase</fullName>
    </alternativeName>
</protein>
<accession>Q2T267</accession>
<organism>
    <name type="scientific">Burkholderia thailandensis (strain ATCC 700388 / DSM 13276 / CCUG 48851 / CIP 106301 / E264)</name>
    <dbReference type="NCBI Taxonomy" id="271848"/>
    <lineage>
        <taxon>Bacteria</taxon>
        <taxon>Pseudomonadati</taxon>
        <taxon>Pseudomonadota</taxon>
        <taxon>Betaproteobacteria</taxon>
        <taxon>Burkholderiales</taxon>
        <taxon>Burkholderiaceae</taxon>
        <taxon>Burkholderia</taxon>
        <taxon>pseudomallei group</taxon>
    </lineage>
</organism>
<reference key="1">
    <citation type="journal article" date="2005" name="BMC Genomics">
        <title>Bacterial genome adaptation to niches: divergence of the potential virulence genes in three Burkholderia species of different survival strategies.</title>
        <authorList>
            <person name="Kim H.S."/>
            <person name="Schell M.A."/>
            <person name="Yu Y."/>
            <person name="Ulrich R.L."/>
            <person name="Sarria S.H."/>
            <person name="Nierman W.C."/>
            <person name="DeShazer D."/>
        </authorList>
    </citation>
    <scope>NUCLEOTIDE SEQUENCE [LARGE SCALE GENOMIC DNA]</scope>
    <source>
        <strain>ATCC 700388 / DSM 13276 / CCUG 48851 / CIP 106301 / E264</strain>
    </source>
</reference>
<dbReference type="EC" id="2.5.1.6" evidence="1"/>
<dbReference type="EMBL" id="CP000086">
    <property type="protein sequence ID" value="ABC38395.1"/>
    <property type="molecule type" value="Genomic_DNA"/>
</dbReference>
<dbReference type="RefSeq" id="WP_009893546.1">
    <property type="nucleotide sequence ID" value="NZ_CP008785.1"/>
</dbReference>
<dbReference type="SMR" id="Q2T267"/>
<dbReference type="GeneID" id="45119945"/>
<dbReference type="KEGG" id="bte:BTH_I0174"/>
<dbReference type="HOGENOM" id="CLU_041802_1_1_4"/>
<dbReference type="UniPathway" id="UPA00315">
    <property type="reaction ID" value="UER00080"/>
</dbReference>
<dbReference type="Proteomes" id="UP000001930">
    <property type="component" value="Chromosome I"/>
</dbReference>
<dbReference type="GO" id="GO:0005737">
    <property type="term" value="C:cytoplasm"/>
    <property type="evidence" value="ECO:0007669"/>
    <property type="project" value="UniProtKB-SubCell"/>
</dbReference>
<dbReference type="GO" id="GO:0005524">
    <property type="term" value="F:ATP binding"/>
    <property type="evidence" value="ECO:0007669"/>
    <property type="project" value="UniProtKB-UniRule"/>
</dbReference>
<dbReference type="GO" id="GO:0000287">
    <property type="term" value="F:magnesium ion binding"/>
    <property type="evidence" value="ECO:0007669"/>
    <property type="project" value="UniProtKB-UniRule"/>
</dbReference>
<dbReference type="GO" id="GO:0004478">
    <property type="term" value="F:methionine adenosyltransferase activity"/>
    <property type="evidence" value="ECO:0007669"/>
    <property type="project" value="UniProtKB-UniRule"/>
</dbReference>
<dbReference type="GO" id="GO:0006730">
    <property type="term" value="P:one-carbon metabolic process"/>
    <property type="evidence" value="ECO:0007669"/>
    <property type="project" value="UniProtKB-KW"/>
</dbReference>
<dbReference type="GO" id="GO:0006556">
    <property type="term" value="P:S-adenosylmethionine biosynthetic process"/>
    <property type="evidence" value="ECO:0007669"/>
    <property type="project" value="UniProtKB-UniRule"/>
</dbReference>
<dbReference type="CDD" id="cd18079">
    <property type="entry name" value="S-AdoMet_synt"/>
    <property type="match status" value="1"/>
</dbReference>
<dbReference type="FunFam" id="3.30.300.10:FF:000003">
    <property type="entry name" value="S-adenosylmethionine synthase"/>
    <property type="match status" value="1"/>
</dbReference>
<dbReference type="FunFam" id="3.30.300.10:FF:000004">
    <property type="entry name" value="S-adenosylmethionine synthase"/>
    <property type="match status" value="1"/>
</dbReference>
<dbReference type="Gene3D" id="3.30.300.10">
    <property type="match status" value="3"/>
</dbReference>
<dbReference type="HAMAP" id="MF_00086">
    <property type="entry name" value="S_AdoMet_synth1"/>
    <property type="match status" value="1"/>
</dbReference>
<dbReference type="InterPro" id="IPR022631">
    <property type="entry name" value="ADOMET_SYNTHASE_CS"/>
</dbReference>
<dbReference type="InterPro" id="IPR022630">
    <property type="entry name" value="S-AdoMet_synt_C"/>
</dbReference>
<dbReference type="InterPro" id="IPR022629">
    <property type="entry name" value="S-AdoMet_synt_central"/>
</dbReference>
<dbReference type="InterPro" id="IPR022628">
    <property type="entry name" value="S-AdoMet_synt_N"/>
</dbReference>
<dbReference type="InterPro" id="IPR002133">
    <property type="entry name" value="S-AdoMet_synthetase"/>
</dbReference>
<dbReference type="InterPro" id="IPR022636">
    <property type="entry name" value="S-AdoMet_synthetase_sfam"/>
</dbReference>
<dbReference type="NCBIfam" id="TIGR01034">
    <property type="entry name" value="metK"/>
    <property type="match status" value="1"/>
</dbReference>
<dbReference type="PANTHER" id="PTHR11964">
    <property type="entry name" value="S-ADENOSYLMETHIONINE SYNTHETASE"/>
    <property type="match status" value="1"/>
</dbReference>
<dbReference type="Pfam" id="PF02773">
    <property type="entry name" value="S-AdoMet_synt_C"/>
    <property type="match status" value="1"/>
</dbReference>
<dbReference type="Pfam" id="PF02772">
    <property type="entry name" value="S-AdoMet_synt_M"/>
    <property type="match status" value="1"/>
</dbReference>
<dbReference type="Pfam" id="PF00438">
    <property type="entry name" value="S-AdoMet_synt_N"/>
    <property type="match status" value="1"/>
</dbReference>
<dbReference type="PIRSF" id="PIRSF000497">
    <property type="entry name" value="MAT"/>
    <property type="match status" value="1"/>
</dbReference>
<dbReference type="SUPFAM" id="SSF55973">
    <property type="entry name" value="S-adenosylmethionine synthetase"/>
    <property type="match status" value="3"/>
</dbReference>
<dbReference type="PROSITE" id="PS00376">
    <property type="entry name" value="ADOMET_SYNTHASE_1"/>
    <property type="match status" value="1"/>
</dbReference>
<dbReference type="PROSITE" id="PS00377">
    <property type="entry name" value="ADOMET_SYNTHASE_2"/>
    <property type="match status" value="1"/>
</dbReference>
<keyword id="KW-0067">ATP-binding</keyword>
<keyword id="KW-0963">Cytoplasm</keyword>
<keyword id="KW-0460">Magnesium</keyword>
<keyword id="KW-0479">Metal-binding</keyword>
<keyword id="KW-0547">Nucleotide-binding</keyword>
<keyword id="KW-0554">One-carbon metabolism</keyword>
<keyword id="KW-0630">Potassium</keyword>
<keyword id="KW-0808">Transferase</keyword>